<gene>
    <name type="primary">rps12</name>
</gene>
<protein>
    <recommendedName>
        <fullName evidence="2">Small ribosomal subunit protein uS12c</fullName>
    </recommendedName>
    <alternativeName>
        <fullName>30S ribosomal protein S12, chloroplastic</fullName>
    </alternativeName>
</protein>
<sequence>MPTIKQLIRNTRQPIRNVTKSPALRGCPQRRGTCTRVYTINPKKPNSALRKVARVRLTSGFEITAYIPGIGHNSQEHSVVLVRGGRVKDLPGVRYHIVRGTLDAVGVKDRQQGRSKYGVKRPK</sequence>
<evidence type="ECO:0000250" key="1"/>
<evidence type="ECO:0000305" key="2"/>
<feature type="chain" id="PRO_0000146413" description="Small ribosomal subunit protein uS12c">
    <location>
        <begin position="1"/>
        <end position="123"/>
    </location>
</feature>
<keyword id="KW-0150">Chloroplast</keyword>
<keyword id="KW-0934">Plastid</keyword>
<keyword id="KW-0687">Ribonucleoprotein</keyword>
<keyword id="KW-0689">Ribosomal protein</keyword>
<keyword id="KW-0694">RNA-binding</keyword>
<keyword id="KW-0699">rRNA-binding</keyword>
<geneLocation type="chloroplast"/>
<reference key="1">
    <citation type="journal article" date="2000" name="Mol. Gen. Genet.">
        <title>Complete nucleotide sequence of the Oenothera elata plastid chromosome, representing plastome I of the five distinguishable Euoenothera plastomes.</title>
        <authorList>
            <person name="Hupfer H."/>
            <person name="Swiatek M."/>
            <person name="Hornung S."/>
            <person name="Herrmann R.G."/>
            <person name="Maier R.M."/>
            <person name="Chiu W.-L."/>
            <person name="Sears B."/>
        </authorList>
    </citation>
    <scope>NUCLEOTIDE SEQUENCE [LARGE SCALE GENOMIC DNA]</scope>
    <source>
        <strain>cv. Johansen</strain>
    </source>
</reference>
<comment type="function">
    <text evidence="1">With S4 and S5 plays an important role in translational accuracy. Located at the interface of the 30S and 50S subunits (By similarity).</text>
</comment>
<comment type="subunit">
    <text evidence="1">Part of the 30S ribosomal subunit.</text>
</comment>
<comment type="subcellular location">
    <subcellularLocation>
        <location>Plastid</location>
        <location>Chloroplast</location>
    </subcellularLocation>
</comment>
<comment type="similarity">
    <text evidence="2">Belongs to the universal ribosomal protein uS12 family.</text>
</comment>
<name>RR12_OENEH</name>
<dbReference type="EMBL" id="AJ271079">
    <property type="protein sequence ID" value="CAB67182.1"/>
    <property type="molecule type" value="Genomic_DNA"/>
</dbReference>
<dbReference type="RefSeq" id="NP_084768.1">
    <property type="nucleotide sequence ID" value="NC_002693.2"/>
</dbReference>
<dbReference type="SMR" id="Q9MDK3"/>
<dbReference type="GeneID" id="802700"/>
<dbReference type="GO" id="GO:0009507">
    <property type="term" value="C:chloroplast"/>
    <property type="evidence" value="ECO:0007669"/>
    <property type="project" value="UniProtKB-SubCell"/>
</dbReference>
<dbReference type="GO" id="GO:0015935">
    <property type="term" value="C:small ribosomal subunit"/>
    <property type="evidence" value="ECO:0007669"/>
    <property type="project" value="InterPro"/>
</dbReference>
<dbReference type="GO" id="GO:0019843">
    <property type="term" value="F:rRNA binding"/>
    <property type="evidence" value="ECO:0007669"/>
    <property type="project" value="UniProtKB-UniRule"/>
</dbReference>
<dbReference type="GO" id="GO:0003735">
    <property type="term" value="F:structural constituent of ribosome"/>
    <property type="evidence" value="ECO:0007669"/>
    <property type="project" value="InterPro"/>
</dbReference>
<dbReference type="GO" id="GO:0006412">
    <property type="term" value="P:translation"/>
    <property type="evidence" value="ECO:0007669"/>
    <property type="project" value="UniProtKB-UniRule"/>
</dbReference>
<dbReference type="CDD" id="cd03368">
    <property type="entry name" value="Ribosomal_S12"/>
    <property type="match status" value="1"/>
</dbReference>
<dbReference type="FunFam" id="2.40.50.140:FF:000008">
    <property type="entry name" value="30S ribosomal protein S12, chloroplastic"/>
    <property type="match status" value="1"/>
</dbReference>
<dbReference type="Gene3D" id="2.40.50.140">
    <property type="entry name" value="Nucleic acid-binding proteins"/>
    <property type="match status" value="1"/>
</dbReference>
<dbReference type="HAMAP" id="MF_00403_B">
    <property type="entry name" value="Ribosomal_uS12_B"/>
    <property type="match status" value="1"/>
</dbReference>
<dbReference type="InterPro" id="IPR012340">
    <property type="entry name" value="NA-bd_OB-fold"/>
</dbReference>
<dbReference type="InterPro" id="IPR006032">
    <property type="entry name" value="Ribosomal_uS12"/>
</dbReference>
<dbReference type="InterPro" id="IPR005679">
    <property type="entry name" value="Ribosomal_uS12_bac"/>
</dbReference>
<dbReference type="NCBIfam" id="TIGR00981">
    <property type="entry name" value="rpsL_bact"/>
    <property type="match status" value="1"/>
</dbReference>
<dbReference type="PANTHER" id="PTHR11652">
    <property type="entry name" value="30S RIBOSOMAL PROTEIN S12 FAMILY MEMBER"/>
    <property type="match status" value="1"/>
</dbReference>
<dbReference type="Pfam" id="PF00164">
    <property type="entry name" value="Ribosom_S12_S23"/>
    <property type="match status" value="1"/>
</dbReference>
<dbReference type="PIRSF" id="PIRSF002133">
    <property type="entry name" value="Ribosomal_S12/S23"/>
    <property type="match status" value="1"/>
</dbReference>
<dbReference type="PRINTS" id="PR01034">
    <property type="entry name" value="RIBOSOMALS12"/>
</dbReference>
<dbReference type="SUPFAM" id="SSF50249">
    <property type="entry name" value="Nucleic acid-binding proteins"/>
    <property type="match status" value="1"/>
</dbReference>
<dbReference type="PROSITE" id="PS00055">
    <property type="entry name" value="RIBOSOMAL_S12"/>
    <property type="match status" value="1"/>
</dbReference>
<proteinExistence type="inferred from homology"/>
<accession>Q9MDK3</accession>
<accession>Q9BA09</accession>
<organism>
    <name type="scientific">Oenothera elata subsp. hookeri</name>
    <name type="common">Hooker's evening primrose</name>
    <name type="synonym">Oenothera hookeri</name>
    <dbReference type="NCBI Taxonomy" id="85636"/>
    <lineage>
        <taxon>Eukaryota</taxon>
        <taxon>Viridiplantae</taxon>
        <taxon>Streptophyta</taxon>
        <taxon>Embryophyta</taxon>
        <taxon>Tracheophyta</taxon>
        <taxon>Spermatophyta</taxon>
        <taxon>Magnoliopsida</taxon>
        <taxon>eudicotyledons</taxon>
        <taxon>Gunneridae</taxon>
        <taxon>Pentapetalae</taxon>
        <taxon>rosids</taxon>
        <taxon>malvids</taxon>
        <taxon>Myrtales</taxon>
        <taxon>Onagraceae</taxon>
        <taxon>Onagroideae</taxon>
        <taxon>Onagreae</taxon>
        <taxon>Oenothera</taxon>
    </lineage>
</organism>